<evidence type="ECO:0000255" key="1">
    <source>
        <dbReference type="PROSITE-ProRule" id="PRU00042"/>
    </source>
</evidence>
<evidence type="ECO:0000256" key="2">
    <source>
        <dbReference type="SAM" id="MobiDB-lite"/>
    </source>
</evidence>
<evidence type="ECO:0000269" key="3">
    <source>
    </source>
</evidence>
<evidence type="ECO:0000269" key="4">
    <source>
    </source>
</evidence>
<evidence type="ECO:0000269" key="5">
    <source>
    </source>
</evidence>
<evidence type="ECO:0000269" key="6">
    <source>
    </source>
</evidence>
<evidence type="ECO:0000269" key="7">
    <source>
    </source>
</evidence>
<evidence type="ECO:0000303" key="8">
    <source>
    </source>
</evidence>
<evidence type="ECO:0000303" key="9">
    <source>
    </source>
</evidence>
<evidence type="ECO:0000305" key="10"/>
<evidence type="ECO:0000312" key="11">
    <source>
        <dbReference type="WormBase" id="F18A1.2a"/>
    </source>
</evidence>
<evidence type="ECO:0000312" key="12">
    <source>
        <dbReference type="WormBase" id="F18A1.2b"/>
    </source>
</evidence>
<evidence type="ECO:0000312" key="13">
    <source>
        <dbReference type="WormBase" id="F18A1.2c"/>
    </source>
</evidence>
<evidence type="ECO:0000312" key="14">
    <source>
        <dbReference type="WormBase" id="F18A1.2d"/>
    </source>
</evidence>
<comment type="function">
    <text evidence="4 5 7">Probable transcription factor (PubMed:24885717, PubMed:7956818). Required to specify the fates of hypodermal and neuron-associated support cells (PubMed:7956818). Functions during vulval development, playing a role in vulval precursor cell fate specification (PubMed:11063687, PubMed:24885717). Positively modulates expression of homeobox protein lin-39, perhaps by binding to regulatory regions of the lin-39 gene, acting in the vulval lineage (PubMed:24885717).</text>
</comment>
<comment type="subcellular location">
    <subcellularLocation>
        <location evidence="10">Nucleus</location>
    </subcellularLocation>
</comment>
<comment type="alternative products">
    <event type="alternative splicing"/>
    <isoform>
        <id>Q27355-1</id>
        <name evidence="14">d</name>
        <sequence type="displayed"/>
    </isoform>
    <isoform>
        <id>Q27355-2</id>
        <name evidence="11">a</name>
        <name evidence="8">lin-26B</name>
        <sequence type="described" ref="VSP_060480"/>
    </isoform>
    <isoform>
        <id>Q27355-3</id>
        <name evidence="12">b</name>
        <name evidence="8">lin-26C</name>
        <sequence type="described" ref="VSP_060480 VSP_060482 VSP_060483"/>
    </isoform>
    <isoform>
        <id>Q27355-4</id>
        <name evidence="13">c</name>
        <name evidence="8 9">lin-26C</name>
        <sequence type="described" ref="VSP_060481"/>
    </isoform>
</comment>
<comment type="tissue specificity">
    <text evidence="3 7">Expressed in somatic gonads and germline precursors until the 50-cell stage. After the 100-cell stage, expression is seen in differentiating hypodermal and support cells (at protein level).</text>
</comment>
<comment type="developmental stage">
    <text evidence="3">Expressed throughout development from embryos to adults.</text>
</comment>
<comment type="disruption phenotype">
    <text evidence="5 6">RNAi-mediated knockdown results in embryonic lethality (PubMed:30921322). This is rescued by RNAi-mediated knockdown of rsd-6, and nrde-2 (PubMed:30921322). RNAi-mediated knockdown at the larval L1 stage causes a weak but significant decrease in expression of lin-39 (PubMed:24885717). Knockdown in mothers caused lower levels of lin-39 expression in the P blastomere of embryos (PubMed:24885717). Knockdown in L1 stage larvae, in a lin-39 mutant background, causes abnormal fusion of vulval precursor cells at larval stage L2 (PubMed:24885717).</text>
</comment>
<reference key="1">
    <citation type="journal article" date="1994" name="Development">
        <title>The Caenorhabditis elegans gene lin-26 is required to specify the fates of hypodermal cells and encodes a presumptive zinc-finger transcription factor.</title>
        <authorList>
            <person name="Labouesse M."/>
            <person name="Sookhareea S."/>
            <person name="Horvitz H.R."/>
        </authorList>
    </citation>
    <scope>NUCLEOTIDE SEQUENCE [MRNA] (ISOFORM C)</scope>
    <scope>FUNCTION</scope>
    <scope>TISSUE SPECIFICITY</scope>
    <scope>MUTAGENESIS OF GLY-368; SER-369 AND LEU-373</scope>
    <source>
        <strain>Bristol N2</strain>
    </source>
</reference>
<reference key="2">
    <citation type="journal article" date="1999" name="Genetics">
        <title>lir-2, lir-1 and lin-26 encode a new class of zinc-finger proteins and are organized in two overlapping operons both in Caenorhabditis elegans and in Caenorhabditis briggsae.</title>
        <authorList>
            <person name="Dufourcq P."/>
            <person name="Chanal P."/>
            <person name="Vicaire S."/>
            <person name="Camut E."/>
            <person name="Quintin S."/>
            <person name="den Boer B.B.W."/>
            <person name="Bosher J.M."/>
            <person name="Labouesse M."/>
        </authorList>
    </citation>
    <scope>NUCLEOTIDE SEQUENCE [MRNA] (ISOFORM A)</scope>
    <scope>TISSUE SPECIFICITY</scope>
    <scope>DEVELOPMENTAL STAGE</scope>
    <source>
        <strain>Bristol N2</strain>
    </source>
</reference>
<reference key="3">
    <citation type="journal article" date="1998" name="Science">
        <title>Genome sequence of the nematode C. elegans: a platform for investigating biology.</title>
        <authorList>
            <consortium name="The C. elegans sequencing consortium"/>
        </authorList>
    </citation>
    <scope>NUCLEOTIDE SEQUENCE [LARGE SCALE GENOMIC DNA]</scope>
    <source>
        <strain>Bristol N2</strain>
    </source>
</reference>
<reference key="4">
    <citation type="journal article" date="2000" name="Genetics">
        <title>Protruding vulva mutants identify novel loci and Wnt signaling factors that function during Caenorhabditis elegans vulva development.</title>
        <authorList>
            <person name="Eisenmann D.M."/>
            <person name="Kim S.K."/>
        </authorList>
    </citation>
    <scope>FUNCTION</scope>
</reference>
<reference evidence="10" key="5">
    <citation type="journal article" date="2014" name="BMC Dev. Biol.">
        <title>Multiple transcription factors directly regulate Hox gene lin-39 expression in ventral hypodermal cells of the C. elegans embryo and larva, including the hypodermal fate regulators LIN-26 and ELT-6.</title>
        <authorList>
            <person name="Liu W.J."/>
            <person name="Reece-Hoyes J.S."/>
            <person name="Walhout A.J."/>
            <person name="Eisenmann D.M."/>
        </authorList>
    </citation>
    <scope>FUNCTION</scope>
    <scope>DISRUPTION PHENOTYPE</scope>
    <scope>MUTAGENESIS OF LEU-373</scope>
</reference>
<reference key="6">
    <citation type="journal article" date="2019" name="PLoS Genet.">
        <title>The meiotic phosphatase GSP-2/PP1 promotes germline immortality and small RNA-mediated genome silencing.</title>
        <authorList>
            <person name="Billmyre K.K."/>
            <person name="Doebley A.L."/>
            <person name="Spichal M."/>
            <person name="Heestand B."/>
            <person name="Belicard T."/>
            <person name="Sato-Carlton A."/>
            <person name="Flibotte S."/>
            <person name="Simon M."/>
            <person name="Gnazzo M."/>
            <person name="Skop A."/>
            <person name="Moerman D."/>
            <person name="Carlton P.M."/>
            <person name="Sarkies P."/>
            <person name="Ahmed S."/>
        </authorList>
    </citation>
    <scope>DISRUPTION PHENOTYPE</scope>
</reference>
<keyword id="KW-0025">Alternative splicing</keyword>
<keyword id="KW-0238">DNA-binding</keyword>
<keyword id="KW-0479">Metal-binding</keyword>
<keyword id="KW-0539">Nucleus</keyword>
<keyword id="KW-1185">Reference proteome</keyword>
<keyword id="KW-0677">Repeat</keyword>
<keyword id="KW-0804">Transcription</keyword>
<keyword id="KW-0805">Transcription regulation</keyword>
<keyword id="KW-0862">Zinc</keyword>
<keyword id="KW-0863">Zinc-finger</keyword>
<gene>
    <name evidence="14" type="primary">lin-26</name>
    <name evidence="14" type="ORF">F18A1.2</name>
</gene>
<proteinExistence type="evidence at protein level"/>
<dbReference type="EMBL" id="Z32673">
    <property type="protein sequence ID" value="CAA83585.1"/>
    <property type="molecule type" value="mRNA"/>
</dbReference>
<dbReference type="EMBL" id="AJ130957">
    <property type="protein sequence ID" value="CAA10262.1"/>
    <property type="molecule type" value="mRNA"/>
</dbReference>
<dbReference type="EMBL" id="BX284602">
    <property type="protein sequence ID" value="CCD62034.1"/>
    <property type="molecule type" value="Genomic_DNA"/>
</dbReference>
<dbReference type="EMBL" id="BX284602">
    <property type="protein sequence ID" value="CDH93451.1"/>
    <property type="molecule type" value="Genomic_DNA"/>
</dbReference>
<dbReference type="EMBL" id="BX284602">
    <property type="protein sequence ID" value="CDH93452.1"/>
    <property type="molecule type" value="Genomic_DNA"/>
</dbReference>
<dbReference type="EMBL" id="BX284602">
    <property type="protein sequence ID" value="SOF58752.1"/>
    <property type="molecule type" value="Genomic_DNA"/>
</dbReference>
<dbReference type="PIR" id="T34222">
    <property type="entry name" value="T34222"/>
</dbReference>
<dbReference type="RefSeq" id="NP_001022092.1">
    <molecule id="Q27355-2"/>
    <property type="nucleotide sequence ID" value="NM_001026921.6"/>
</dbReference>
<dbReference type="RefSeq" id="NP_001293586.1">
    <molecule id="Q27355-3"/>
    <property type="nucleotide sequence ID" value="NM_001306657.3"/>
</dbReference>
<dbReference type="RefSeq" id="NP_001293587.1">
    <molecule id="Q27355-4"/>
    <property type="nucleotide sequence ID" value="NM_001306658.3"/>
</dbReference>
<dbReference type="RefSeq" id="NP_001343760.1">
    <molecule id="Q27355-1"/>
    <property type="nucleotide sequence ID" value="NM_001356872.3"/>
</dbReference>
<dbReference type="BioGRID" id="532369">
    <property type="interactions" value="4"/>
</dbReference>
<dbReference type="FunCoup" id="Q27355">
    <property type="interactions" value="1760"/>
</dbReference>
<dbReference type="IntAct" id="Q27355">
    <property type="interactions" value="5"/>
</dbReference>
<dbReference type="STRING" id="6239.F18A1.2d.1"/>
<dbReference type="PaxDb" id="6239-F18A1.2c"/>
<dbReference type="PeptideAtlas" id="Q27355"/>
<dbReference type="EnsemblMetazoa" id="F18A1.2a.1">
    <molecule id="Q27355-2"/>
    <property type="protein sequence ID" value="F18A1.2a.1"/>
    <property type="gene ID" value="WBGene00003012"/>
</dbReference>
<dbReference type="EnsemblMetazoa" id="F18A1.2b.1">
    <molecule id="Q27355-3"/>
    <property type="protein sequence ID" value="F18A1.2b.1"/>
    <property type="gene ID" value="WBGene00003012"/>
</dbReference>
<dbReference type="EnsemblMetazoa" id="F18A1.2c.1">
    <molecule id="Q27355-4"/>
    <property type="protein sequence ID" value="F18A1.2c.1"/>
    <property type="gene ID" value="WBGene00003012"/>
</dbReference>
<dbReference type="EnsemblMetazoa" id="F18A1.2d.1">
    <molecule id="Q27355-1"/>
    <property type="protein sequence ID" value="F18A1.2d.1"/>
    <property type="gene ID" value="WBGene00003012"/>
</dbReference>
<dbReference type="GeneID" id="3565051"/>
<dbReference type="KEGG" id="cel:CELE_F18A1.2"/>
<dbReference type="UCSC" id="F18A1.2.2">
    <molecule id="Q27355-1"/>
    <property type="organism name" value="c. elegans"/>
</dbReference>
<dbReference type="AGR" id="WB:WBGene00003012"/>
<dbReference type="CTD" id="3565051"/>
<dbReference type="WormBase" id="F18A1.2a">
    <molecule id="Q27355-2"/>
    <property type="protein sequence ID" value="CE27972"/>
    <property type="gene ID" value="WBGene00003012"/>
    <property type="gene designation" value="lin-26"/>
</dbReference>
<dbReference type="WormBase" id="F18A1.2b">
    <molecule id="Q27355-3"/>
    <property type="protein sequence ID" value="CE48778"/>
    <property type="gene ID" value="WBGene00003012"/>
    <property type="gene designation" value="lin-26"/>
</dbReference>
<dbReference type="WormBase" id="F18A1.2c">
    <molecule id="Q27355-4"/>
    <property type="protein sequence ID" value="CE04402"/>
    <property type="gene ID" value="WBGene00003012"/>
    <property type="gene designation" value="lin-26"/>
</dbReference>
<dbReference type="WormBase" id="F18A1.2d">
    <molecule id="Q27355-1"/>
    <property type="protein sequence ID" value="CE52355"/>
    <property type="gene ID" value="WBGene00003012"/>
    <property type="gene designation" value="lin-26"/>
</dbReference>
<dbReference type="eggNOG" id="ENOG502TGSS">
    <property type="taxonomic scope" value="Eukaryota"/>
</dbReference>
<dbReference type="GeneTree" id="ENSGT00940000174779"/>
<dbReference type="HOGENOM" id="CLU_046043_0_0_1"/>
<dbReference type="InParanoid" id="Q27355"/>
<dbReference type="OMA" id="DAHDITT"/>
<dbReference type="OrthoDB" id="5870471at2759"/>
<dbReference type="SignaLink" id="Q27355"/>
<dbReference type="PRO" id="PR:Q27355"/>
<dbReference type="Proteomes" id="UP000001940">
    <property type="component" value="Chromosome II"/>
</dbReference>
<dbReference type="Bgee" id="WBGene00003012">
    <property type="expression patterns" value="Expressed in embryo and 4 other cell types or tissues"/>
</dbReference>
<dbReference type="GO" id="GO:0005634">
    <property type="term" value="C:nucleus"/>
    <property type="evidence" value="ECO:0000314"/>
    <property type="project" value="WormBase"/>
</dbReference>
<dbReference type="GO" id="GO:0003700">
    <property type="term" value="F:DNA-binding transcription factor activity"/>
    <property type="evidence" value="ECO:0000250"/>
    <property type="project" value="WormBase"/>
</dbReference>
<dbReference type="GO" id="GO:0000977">
    <property type="term" value="F:RNA polymerase II transcription regulatory region sequence-specific DNA binding"/>
    <property type="evidence" value="ECO:0000314"/>
    <property type="project" value="WormBase"/>
</dbReference>
<dbReference type="GO" id="GO:0008270">
    <property type="term" value="F:zinc ion binding"/>
    <property type="evidence" value="ECO:0007669"/>
    <property type="project" value="UniProtKB-KW"/>
</dbReference>
<dbReference type="GO" id="GO:0007398">
    <property type="term" value="P:ectoderm development"/>
    <property type="evidence" value="ECO:0000315"/>
    <property type="project" value="WormBase"/>
</dbReference>
<dbReference type="GO" id="GO:0008544">
    <property type="term" value="P:epidermis development"/>
    <property type="evidence" value="ECO:0000315"/>
    <property type="project" value="WormBase"/>
</dbReference>
<dbReference type="GO" id="GO:0045197">
    <property type="term" value="P:establishment or maintenance of epithelial cell apical/basal polarity"/>
    <property type="evidence" value="ECO:0000315"/>
    <property type="project" value="WormBase"/>
</dbReference>
<dbReference type="GO" id="GO:0008406">
    <property type="term" value="P:gonad development"/>
    <property type="evidence" value="ECO:0000315"/>
    <property type="project" value="WormBase"/>
</dbReference>
<dbReference type="GO" id="GO:0045944">
    <property type="term" value="P:positive regulation of transcription by RNA polymerase II"/>
    <property type="evidence" value="ECO:0000315"/>
    <property type="project" value="WormBase"/>
</dbReference>
<dbReference type="GO" id="GO:0042659">
    <property type="term" value="P:regulation of cell fate specification"/>
    <property type="evidence" value="ECO:0000315"/>
    <property type="project" value="WormBase"/>
</dbReference>
<dbReference type="GO" id="GO:0022414">
    <property type="term" value="P:reproductive process"/>
    <property type="evidence" value="ECO:0000315"/>
    <property type="project" value="WormBase"/>
</dbReference>
<dbReference type="GO" id="GO:0040025">
    <property type="term" value="P:vulval development"/>
    <property type="evidence" value="ECO:0000315"/>
    <property type="project" value="WormBase"/>
</dbReference>
<dbReference type="Gene3D" id="3.30.160.60">
    <property type="entry name" value="Classic Zinc Finger"/>
    <property type="match status" value="1"/>
</dbReference>
<accession>Q27355</accession>
<accession>A0A2C9C321</accession>
<accession>Q9U5Z4</accession>
<accession>U4PC59</accession>
<accession>U4PFD0</accession>
<sequence>MILHGFHLSTSSHCLPFIFRHLFIFHSITALCDHVISNYCNSLKLSNNKFNQMLSKFVVVEVSNSNNTMTLVEYLVTHGFDKFAVVTDLVDHPSFKYKDGSSSPESPSTTASTAAQHTPPRTAVSTPTSINTPVPPHQNKQRHSIDKIAANLSTKKVSPSSIEKQLQRTSHNPLHQLSTPHALSQLQKLLEEQHKINQMNIQKKEQERQQAEIQRILLQQANAAQINHSFGLERLTPEYDDNHHSETISKASSEDLKTEPDSTDFGLGTSDDQVRASMLHLLHPVFAPAFGMLDAENIFGAASKPTTPASKRRNTDSNGAPSKKHRWLPVNELEESRSSRGKNCGRVHCKATYKCALCGKPTTLNSTGSRWNLLRHVIMIHSDCKPYKCWDCDFTGIKSNVISHARQCRHNAEDAHDITTDEMRAEWNLRLHECFPDYVRAKERGWQPEEVTVKKEEVEESPTLVKQELTLVKQEPTFAEQLEPMAQPLV</sequence>
<organism>
    <name type="scientific">Caenorhabditis elegans</name>
    <dbReference type="NCBI Taxonomy" id="6239"/>
    <lineage>
        <taxon>Eukaryota</taxon>
        <taxon>Metazoa</taxon>
        <taxon>Ecdysozoa</taxon>
        <taxon>Nematoda</taxon>
        <taxon>Chromadorea</taxon>
        <taxon>Rhabditida</taxon>
        <taxon>Rhabditina</taxon>
        <taxon>Rhabditomorpha</taxon>
        <taxon>Rhabditoidea</taxon>
        <taxon>Rhabditidae</taxon>
        <taxon>Peloderinae</taxon>
        <taxon>Caenorhabditis</taxon>
    </lineage>
</organism>
<protein>
    <recommendedName>
        <fullName>Transcription factor lin-26</fullName>
    </recommendedName>
    <alternativeName>
        <fullName>Abnormal cell lineage protein 26</fullName>
    </alternativeName>
</protein>
<name>LIN26_CAEEL</name>
<feature type="chain" id="PRO_0000084429" description="Transcription factor lin-26">
    <location>
        <begin position="1"/>
        <end position="490"/>
    </location>
</feature>
<feature type="zinc finger region" description="C2H2-type; degenerate" evidence="1">
    <location>
        <begin position="353"/>
        <end position="381"/>
    </location>
</feature>
<feature type="region of interest" description="Disordered" evidence="2">
    <location>
        <begin position="96"/>
        <end position="176"/>
    </location>
</feature>
<feature type="region of interest" description="PEST" evidence="9">
    <location>
        <begin position="101"/>
        <end position="110"/>
    </location>
</feature>
<feature type="region of interest" description="Disordered" evidence="2">
    <location>
        <begin position="236"/>
        <end position="262"/>
    </location>
</feature>
<feature type="region of interest" description="Disordered" evidence="2">
    <location>
        <begin position="302"/>
        <end position="326"/>
    </location>
</feature>
<feature type="compositionally biased region" description="Low complexity" evidence="2">
    <location>
        <begin position="101"/>
        <end position="120"/>
    </location>
</feature>
<feature type="compositionally biased region" description="Polar residues" evidence="2">
    <location>
        <begin position="123"/>
        <end position="132"/>
    </location>
</feature>
<feature type="compositionally biased region" description="Polar residues" evidence="2">
    <location>
        <begin position="151"/>
        <end position="176"/>
    </location>
</feature>
<feature type="compositionally biased region" description="Basic and acidic residues" evidence="2">
    <location>
        <begin position="236"/>
        <end position="260"/>
    </location>
</feature>
<feature type="splice variant" id="VSP_060480" description="In isoform a and isoform b." evidence="10">
    <location>
        <begin position="1"/>
        <end position="52"/>
    </location>
</feature>
<feature type="splice variant" id="VSP_060481" description="In isoform c." evidence="10">
    <location>
        <begin position="35"/>
        <end position="52"/>
    </location>
</feature>
<feature type="splice variant" id="VSP_060482" description="In isoform b." evidence="10">
    <original>CWDCDFTGIKSNVISHARQCRH</original>
    <variation>YRRDACRMESPPSRMLPRLCAC</variation>
    <location>
        <begin position="389"/>
        <end position="410"/>
    </location>
</feature>
<feature type="splice variant" id="VSP_060483" description="In isoform b." evidence="10">
    <location>
        <begin position="411"/>
        <end position="490"/>
    </location>
</feature>
<feature type="mutagenesis site" description="In lin-26(mc1); embryonic lethality and the death of many hypodermal cells." evidence="7">
    <original>G</original>
    <variation>E</variation>
    <location>
        <position position="368"/>
    </location>
</feature>
<feature type="mutagenesis site" description="In lin-26(mc2); embryonic lethality due to a failure of hypodermal cells to enclose the embryo." evidence="7">
    <original>S</original>
    <variation>F</variation>
    <location>
        <position position="369"/>
    </location>
</feature>
<feature type="mutagenesis site" description="In lin-26(n156); hypodermal Pn.p cells express a neural fate; animals lack a vulva. Shows a small but significant decrease in lin-39 at the early larval L3 stage." evidence="7">
    <original>L</original>
    <variation>F</variation>
    <location>
        <position position="373"/>
    </location>
</feature>